<accession>A0Q2A8</accession>
<reference key="1">
    <citation type="journal article" date="2006" name="Nat. Biotechnol.">
        <title>The genome and transcriptomes of the anti-tumor agent Clostridium novyi-NT.</title>
        <authorList>
            <person name="Bettegowda C."/>
            <person name="Huang X."/>
            <person name="Lin J."/>
            <person name="Cheong I."/>
            <person name="Kohli M."/>
            <person name="Szabo S.A."/>
            <person name="Zhang X."/>
            <person name="Diaz L.A. Jr."/>
            <person name="Velculescu V.E."/>
            <person name="Parmigiani G."/>
            <person name="Kinzler K.W."/>
            <person name="Vogelstein B."/>
            <person name="Zhou S."/>
        </authorList>
    </citation>
    <scope>NUCLEOTIDE SEQUENCE [LARGE SCALE GENOMIC DNA]</scope>
    <source>
        <strain>NT</strain>
    </source>
</reference>
<protein>
    <recommendedName>
        <fullName evidence="1">Glutamate-1-semialdehyde 2,1-aminomutase</fullName>
        <shortName evidence="1">GSA</shortName>
        <ecNumber evidence="1">5.4.3.8</ecNumber>
    </recommendedName>
    <alternativeName>
        <fullName evidence="1">Glutamate-1-semialdehyde aminotransferase</fullName>
        <shortName evidence="1">GSA-AT</shortName>
    </alternativeName>
</protein>
<proteinExistence type="inferred from homology"/>
<feature type="chain" id="PRO_0000382297" description="Glutamate-1-semialdehyde 2,1-aminomutase">
    <location>
        <begin position="1"/>
        <end position="433"/>
    </location>
</feature>
<feature type="modified residue" description="N6-(pyridoxal phosphate)lysine" evidence="1">
    <location>
        <position position="270"/>
    </location>
</feature>
<sequence length="433" mass="48017">MKELKHTKSEAMFKEAVKYIPGGVNSPVRAFGSVGLNPIFIDRAKGSKIYDVDGNEYIDYICSWGPLILGHSNEKLYEGIEETLRRGTSYGVPTEIEVKMAKLITEAYPSVDMVRMVNSGTEATMSALRVARGYTRRNKILKFEGCYHGHSDALLVKSGSGTITFGVPTSPGVPEGTVKDTLVCRYNDIEAVKRIFQEQGNEIAAVIVEPVSGNMGVVPGKQEFLQFLRDITKEYKSVLIFDEVITGFRLAYGGAQEVYGIEADMTCFGKIIGAGLPVGAYGGKREIMECVSPMGPVYQAGTLSGNPLAMHMGYKNLNILKENKDVYERLEEKAKRLEEGFNKNIKELGIKATVVRFKAMLCLFFAEGPLNNYDEVSKCDTEMYAKYFGEMLKRGVLIAPAQFEALFLSDAHTDEDIEYTIKANYEALKELKC</sequence>
<name>GSA_CLONN</name>
<keyword id="KW-0963">Cytoplasm</keyword>
<keyword id="KW-0413">Isomerase</keyword>
<keyword id="KW-0627">Porphyrin biosynthesis</keyword>
<keyword id="KW-0663">Pyridoxal phosphate</keyword>
<keyword id="KW-1185">Reference proteome</keyword>
<evidence type="ECO:0000255" key="1">
    <source>
        <dbReference type="HAMAP-Rule" id="MF_00375"/>
    </source>
</evidence>
<comment type="catalytic activity">
    <reaction evidence="1">
        <text>(S)-4-amino-5-oxopentanoate = 5-aminolevulinate</text>
        <dbReference type="Rhea" id="RHEA:14265"/>
        <dbReference type="ChEBI" id="CHEBI:57501"/>
        <dbReference type="ChEBI" id="CHEBI:356416"/>
        <dbReference type="EC" id="5.4.3.8"/>
    </reaction>
</comment>
<comment type="cofactor">
    <cofactor evidence="1">
        <name>pyridoxal 5'-phosphate</name>
        <dbReference type="ChEBI" id="CHEBI:597326"/>
    </cofactor>
</comment>
<comment type="pathway">
    <text evidence="1">Porphyrin-containing compound metabolism; protoporphyrin-IX biosynthesis; 5-aminolevulinate from L-glutamyl-tRNA(Glu): step 2/2.</text>
</comment>
<comment type="subunit">
    <text evidence="1">Homodimer.</text>
</comment>
<comment type="subcellular location">
    <subcellularLocation>
        <location evidence="1">Cytoplasm</location>
    </subcellularLocation>
</comment>
<comment type="similarity">
    <text evidence="1">Belongs to the class-III pyridoxal-phosphate-dependent aminotransferase family. HemL subfamily.</text>
</comment>
<organism>
    <name type="scientific">Clostridium novyi (strain NT)</name>
    <dbReference type="NCBI Taxonomy" id="386415"/>
    <lineage>
        <taxon>Bacteria</taxon>
        <taxon>Bacillati</taxon>
        <taxon>Bacillota</taxon>
        <taxon>Clostridia</taxon>
        <taxon>Eubacteriales</taxon>
        <taxon>Clostridiaceae</taxon>
        <taxon>Clostridium</taxon>
    </lineage>
</organism>
<dbReference type="EC" id="5.4.3.8" evidence="1"/>
<dbReference type="EMBL" id="CP000382">
    <property type="protein sequence ID" value="ABK62364.1"/>
    <property type="molecule type" value="Genomic_DNA"/>
</dbReference>
<dbReference type="RefSeq" id="WP_011722747.1">
    <property type="nucleotide sequence ID" value="NC_008593.1"/>
</dbReference>
<dbReference type="SMR" id="A0Q2A8"/>
<dbReference type="STRING" id="386415.NT01CX_0259"/>
<dbReference type="KEGG" id="cno:NT01CX_0259"/>
<dbReference type="PATRIC" id="fig|386415.7.peg.1795"/>
<dbReference type="eggNOG" id="COG0001">
    <property type="taxonomic scope" value="Bacteria"/>
</dbReference>
<dbReference type="HOGENOM" id="CLU_016922_1_5_9"/>
<dbReference type="UniPathway" id="UPA00251">
    <property type="reaction ID" value="UER00317"/>
</dbReference>
<dbReference type="Proteomes" id="UP000008220">
    <property type="component" value="Chromosome"/>
</dbReference>
<dbReference type="GO" id="GO:0005737">
    <property type="term" value="C:cytoplasm"/>
    <property type="evidence" value="ECO:0007669"/>
    <property type="project" value="UniProtKB-SubCell"/>
</dbReference>
<dbReference type="GO" id="GO:0042286">
    <property type="term" value="F:glutamate-1-semialdehyde 2,1-aminomutase activity"/>
    <property type="evidence" value="ECO:0007669"/>
    <property type="project" value="UniProtKB-UniRule"/>
</dbReference>
<dbReference type="GO" id="GO:0030170">
    <property type="term" value="F:pyridoxal phosphate binding"/>
    <property type="evidence" value="ECO:0007669"/>
    <property type="project" value="InterPro"/>
</dbReference>
<dbReference type="GO" id="GO:0008483">
    <property type="term" value="F:transaminase activity"/>
    <property type="evidence" value="ECO:0007669"/>
    <property type="project" value="InterPro"/>
</dbReference>
<dbReference type="GO" id="GO:0006782">
    <property type="term" value="P:protoporphyrinogen IX biosynthetic process"/>
    <property type="evidence" value="ECO:0007669"/>
    <property type="project" value="UniProtKB-UniRule"/>
</dbReference>
<dbReference type="CDD" id="cd00610">
    <property type="entry name" value="OAT_like"/>
    <property type="match status" value="1"/>
</dbReference>
<dbReference type="FunFam" id="3.40.640.10:FF:000021">
    <property type="entry name" value="Glutamate-1-semialdehyde 2,1-aminomutase"/>
    <property type="match status" value="1"/>
</dbReference>
<dbReference type="Gene3D" id="3.90.1150.10">
    <property type="entry name" value="Aspartate Aminotransferase, domain 1"/>
    <property type="match status" value="1"/>
</dbReference>
<dbReference type="Gene3D" id="3.40.640.10">
    <property type="entry name" value="Type I PLP-dependent aspartate aminotransferase-like (Major domain)"/>
    <property type="match status" value="1"/>
</dbReference>
<dbReference type="HAMAP" id="MF_00375">
    <property type="entry name" value="HemL_aminotrans_3"/>
    <property type="match status" value="1"/>
</dbReference>
<dbReference type="InterPro" id="IPR004639">
    <property type="entry name" value="4pyrrol_synth_GluAld_NH2Trfase"/>
</dbReference>
<dbReference type="InterPro" id="IPR005814">
    <property type="entry name" value="Aminotrans_3"/>
</dbReference>
<dbReference type="InterPro" id="IPR049704">
    <property type="entry name" value="Aminotrans_3_PPA_site"/>
</dbReference>
<dbReference type="InterPro" id="IPR015424">
    <property type="entry name" value="PyrdxlP-dep_Trfase"/>
</dbReference>
<dbReference type="InterPro" id="IPR015421">
    <property type="entry name" value="PyrdxlP-dep_Trfase_major"/>
</dbReference>
<dbReference type="InterPro" id="IPR015422">
    <property type="entry name" value="PyrdxlP-dep_Trfase_small"/>
</dbReference>
<dbReference type="NCBIfam" id="TIGR00713">
    <property type="entry name" value="hemL"/>
    <property type="match status" value="1"/>
</dbReference>
<dbReference type="NCBIfam" id="NF000818">
    <property type="entry name" value="PRK00062.1"/>
    <property type="match status" value="1"/>
</dbReference>
<dbReference type="PANTHER" id="PTHR43713">
    <property type="entry name" value="GLUTAMATE-1-SEMIALDEHYDE 2,1-AMINOMUTASE"/>
    <property type="match status" value="1"/>
</dbReference>
<dbReference type="PANTHER" id="PTHR43713:SF3">
    <property type="entry name" value="GLUTAMATE-1-SEMIALDEHYDE 2,1-AMINOMUTASE 1, CHLOROPLASTIC-RELATED"/>
    <property type="match status" value="1"/>
</dbReference>
<dbReference type="Pfam" id="PF00202">
    <property type="entry name" value="Aminotran_3"/>
    <property type="match status" value="1"/>
</dbReference>
<dbReference type="SUPFAM" id="SSF53383">
    <property type="entry name" value="PLP-dependent transferases"/>
    <property type="match status" value="1"/>
</dbReference>
<dbReference type="PROSITE" id="PS00600">
    <property type="entry name" value="AA_TRANSFER_CLASS_3"/>
    <property type="match status" value="1"/>
</dbReference>
<gene>
    <name evidence="1" type="primary">hemL</name>
    <name type="ordered locus">NT01CX_0259</name>
</gene>